<sequence length="206" mass="23247">MARYLGPKLKLSRREGTDLFLKSGVRAIESKCKIDNAPGVHGARKPRLSDYGLQLREKQKVRRMYGVLEKQFRNYYKESARLQGNTGENLLQLLEGRLDNVVYRMGFGATRAESRQLVSHKAVLVNGKVVNIPSFNVKASDVIAIREKAKKQSRIGAALEIAGQREVPTWVSVDATKMEGVFTRQPERSDLSAEINEQLIIELYSK</sequence>
<protein>
    <recommendedName>
        <fullName evidence="1">Small ribosomal subunit protein uS4A</fullName>
    </recommendedName>
    <alternativeName>
        <fullName evidence="2">30S ribosomal protein S4 1</fullName>
    </alternativeName>
</protein>
<evidence type="ECO:0000255" key="1">
    <source>
        <dbReference type="HAMAP-Rule" id="MF_01306"/>
    </source>
</evidence>
<evidence type="ECO:0000305" key="2"/>
<dbReference type="EMBL" id="CP000510">
    <property type="protein sequence ID" value="ABM04332.1"/>
    <property type="molecule type" value="Genomic_DNA"/>
</dbReference>
<dbReference type="RefSeq" id="WP_011770889.1">
    <property type="nucleotide sequence ID" value="NC_008709.1"/>
</dbReference>
<dbReference type="SMR" id="A1SXW7"/>
<dbReference type="STRING" id="357804.Ping_2613"/>
<dbReference type="KEGG" id="pin:Ping_2613"/>
<dbReference type="eggNOG" id="COG0522">
    <property type="taxonomic scope" value="Bacteria"/>
</dbReference>
<dbReference type="HOGENOM" id="CLU_092403_0_2_6"/>
<dbReference type="OrthoDB" id="9803672at2"/>
<dbReference type="Proteomes" id="UP000000639">
    <property type="component" value="Chromosome"/>
</dbReference>
<dbReference type="GO" id="GO:0015935">
    <property type="term" value="C:small ribosomal subunit"/>
    <property type="evidence" value="ECO:0007669"/>
    <property type="project" value="InterPro"/>
</dbReference>
<dbReference type="GO" id="GO:0019843">
    <property type="term" value="F:rRNA binding"/>
    <property type="evidence" value="ECO:0007669"/>
    <property type="project" value="UniProtKB-UniRule"/>
</dbReference>
<dbReference type="GO" id="GO:0003735">
    <property type="term" value="F:structural constituent of ribosome"/>
    <property type="evidence" value="ECO:0007669"/>
    <property type="project" value="InterPro"/>
</dbReference>
<dbReference type="GO" id="GO:0042274">
    <property type="term" value="P:ribosomal small subunit biogenesis"/>
    <property type="evidence" value="ECO:0007669"/>
    <property type="project" value="TreeGrafter"/>
</dbReference>
<dbReference type="GO" id="GO:0006412">
    <property type="term" value="P:translation"/>
    <property type="evidence" value="ECO:0007669"/>
    <property type="project" value="UniProtKB-UniRule"/>
</dbReference>
<dbReference type="CDD" id="cd00165">
    <property type="entry name" value="S4"/>
    <property type="match status" value="1"/>
</dbReference>
<dbReference type="FunFam" id="1.10.1050.10:FF:000001">
    <property type="entry name" value="30S ribosomal protein S4"/>
    <property type="match status" value="1"/>
</dbReference>
<dbReference type="FunFam" id="3.10.290.10:FF:000001">
    <property type="entry name" value="30S ribosomal protein S4"/>
    <property type="match status" value="1"/>
</dbReference>
<dbReference type="Gene3D" id="1.10.1050.10">
    <property type="entry name" value="Ribosomal Protein S4 Delta 41, Chain A, domain 1"/>
    <property type="match status" value="1"/>
</dbReference>
<dbReference type="Gene3D" id="3.10.290.10">
    <property type="entry name" value="RNA-binding S4 domain"/>
    <property type="match status" value="1"/>
</dbReference>
<dbReference type="HAMAP" id="MF_01306_B">
    <property type="entry name" value="Ribosomal_uS4_B"/>
    <property type="match status" value="1"/>
</dbReference>
<dbReference type="InterPro" id="IPR022801">
    <property type="entry name" value="Ribosomal_uS4"/>
</dbReference>
<dbReference type="InterPro" id="IPR005709">
    <property type="entry name" value="Ribosomal_uS4_bac-type"/>
</dbReference>
<dbReference type="InterPro" id="IPR018079">
    <property type="entry name" value="Ribosomal_uS4_CS"/>
</dbReference>
<dbReference type="InterPro" id="IPR001912">
    <property type="entry name" value="Ribosomal_uS4_N"/>
</dbReference>
<dbReference type="InterPro" id="IPR002942">
    <property type="entry name" value="S4_RNA-bd"/>
</dbReference>
<dbReference type="InterPro" id="IPR036986">
    <property type="entry name" value="S4_RNA-bd_sf"/>
</dbReference>
<dbReference type="NCBIfam" id="NF003717">
    <property type="entry name" value="PRK05327.1"/>
    <property type="match status" value="1"/>
</dbReference>
<dbReference type="NCBIfam" id="TIGR01017">
    <property type="entry name" value="rpsD_bact"/>
    <property type="match status" value="1"/>
</dbReference>
<dbReference type="PANTHER" id="PTHR11831">
    <property type="entry name" value="30S 40S RIBOSOMAL PROTEIN"/>
    <property type="match status" value="1"/>
</dbReference>
<dbReference type="PANTHER" id="PTHR11831:SF4">
    <property type="entry name" value="SMALL RIBOSOMAL SUBUNIT PROTEIN US4M"/>
    <property type="match status" value="1"/>
</dbReference>
<dbReference type="Pfam" id="PF00163">
    <property type="entry name" value="Ribosomal_S4"/>
    <property type="match status" value="1"/>
</dbReference>
<dbReference type="Pfam" id="PF01479">
    <property type="entry name" value="S4"/>
    <property type="match status" value="1"/>
</dbReference>
<dbReference type="SMART" id="SM01390">
    <property type="entry name" value="Ribosomal_S4"/>
    <property type="match status" value="1"/>
</dbReference>
<dbReference type="SMART" id="SM00363">
    <property type="entry name" value="S4"/>
    <property type="match status" value="1"/>
</dbReference>
<dbReference type="SUPFAM" id="SSF55174">
    <property type="entry name" value="Alpha-L RNA-binding motif"/>
    <property type="match status" value="1"/>
</dbReference>
<dbReference type="PROSITE" id="PS00632">
    <property type="entry name" value="RIBOSOMAL_S4"/>
    <property type="match status" value="1"/>
</dbReference>
<dbReference type="PROSITE" id="PS50889">
    <property type="entry name" value="S4"/>
    <property type="match status" value="1"/>
</dbReference>
<name>RS4A_PSYIN</name>
<comment type="function">
    <text evidence="1">One of the primary rRNA binding proteins, it binds directly to 16S rRNA where it nucleates assembly of the body of the 30S subunit.</text>
</comment>
<comment type="function">
    <text evidence="1">With S5 and S12 plays an important role in translational accuracy.</text>
</comment>
<comment type="subunit">
    <text evidence="1">Part of the 30S ribosomal subunit. Contacts protein S5. The interaction surface between S4 and S5 is involved in control of translational fidelity.</text>
</comment>
<comment type="similarity">
    <text evidence="1">Belongs to the universal ribosomal protein uS4 family.</text>
</comment>
<accession>A1SXW7</accession>
<proteinExistence type="inferred from homology"/>
<feature type="chain" id="PRO_0000293344" description="Small ribosomal subunit protein uS4A">
    <location>
        <begin position="1"/>
        <end position="206"/>
    </location>
</feature>
<feature type="domain" description="S4 RNA-binding" evidence="1">
    <location>
        <begin position="96"/>
        <end position="156"/>
    </location>
</feature>
<keyword id="KW-1185">Reference proteome</keyword>
<keyword id="KW-0687">Ribonucleoprotein</keyword>
<keyword id="KW-0689">Ribosomal protein</keyword>
<keyword id="KW-0694">RNA-binding</keyword>
<keyword id="KW-0699">rRNA-binding</keyword>
<gene>
    <name evidence="1" type="primary">rpsD1</name>
    <name type="ordered locus">Ping_2613</name>
</gene>
<organism>
    <name type="scientific">Psychromonas ingrahamii (strain DSM 17664 / CCUG 51855 / 37)</name>
    <dbReference type="NCBI Taxonomy" id="357804"/>
    <lineage>
        <taxon>Bacteria</taxon>
        <taxon>Pseudomonadati</taxon>
        <taxon>Pseudomonadota</taxon>
        <taxon>Gammaproteobacteria</taxon>
        <taxon>Alteromonadales</taxon>
        <taxon>Psychromonadaceae</taxon>
        <taxon>Psychromonas</taxon>
    </lineage>
</organism>
<reference key="1">
    <citation type="journal article" date="2008" name="BMC Genomics">
        <title>Genomics of an extreme psychrophile, Psychromonas ingrahamii.</title>
        <authorList>
            <person name="Riley M."/>
            <person name="Staley J.T."/>
            <person name="Danchin A."/>
            <person name="Wang T.Z."/>
            <person name="Brettin T.S."/>
            <person name="Hauser L.J."/>
            <person name="Land M.L."/>
            <person name="Thompson L.S."/>
        </authorList>
    </citation>
    <scope>NUCLEOTIDE SEQUENCE [LARGE SCALE GENOMIC DNA]</scope>
    <source>
        <strain>DSM 17664 / CCUG 51855 / 37</strain>
    </source>
</reference>